<gene>
    <name type="primary">SPA2</name>
    <name type="synonym">PEA1</name>
    <name type="ordered locus">YLL021W</name>
    <name type="ORF">L1209</name>
</gene>
<organism>
    <name type="scientific">Saccharomyces cerevisiae (strain ATCC 204508 / S288c)</name>
    <name type="common">Baker's yeast</name>
    <dbReference type="NCBI Taxonomy" id="559292"/>
    <lineage>
        <taxon>Eukaryota</taxon>
        <taxon>Fungi</taxon>
        <taxon>Dikarya</taxon>
        <taxon>Ascomycota</taxon>
        <taxon>Saccharomycotina</taxon>
        <taxon>Saccharomycetes</taxon>
        <taxon>Saccharomycetales</taxon>
        <taxon>Saccharomycetaceae</taxon>
        <taxon>Saccharomyces</taxon>
    </lineage>
</organism>
<name>SPA2_YEAST</name>
<evidence type="ECO:0000255" key="1"/>
<evidence type="ECO:0000256" key="2">
    <source>
        <dbReference type="SAM" id="MobiDB-lite"/>
    </source>
</evidence>
<evidence type="ECO:0000269" key="3">
    <source>
    </source>
</evidence>
<evidence type="ECO:0000269" key="4">
    <source>
    </source>
</evidence>
<evidence type="ECO:0007744" key="5">
    <source>
    </source>
</evidence>
<evidence type="ECO:0007744" key="6">
    <source>
    </source>
</evidence>
<evidence type="ECO:0007744" key="7">
    <source>
    </source>
</evidence>
<evidence type="ECO:0007744" key="8">
    <source>
    </source>
</evidence>
<evidence type="ECO:0007744" key="9">
    <source>
    </source>
</evidence>
<comment type="function">
    <text>Involved in pheromone-induced morphogenesis and efficient mating, perhaps as a cytoskeletal protein.</text>
</comment>
<comment type="subunit">
    <text evidence="4">Interacts with SHS1.</text>
</comment>
<comment type="subcellular location">
    <subcellularLocation>
        <location>Cell tip</location>
    </subcellularLocation>
    <text>Localizes to a sharp patch at the shmoo tip (mating projection) which corresponds to the site of polarized cell growth.</text>
</comment>
<comment type="miscellaneous">
    <text evidence="3">Present with 274 molecules/cell in log phase SD medium.</text>
</comment>
<proteinExistence type="evidence at protein level"/>
<keyword id="KW-0133">Cell shape</keyword>
<keyword id="KW-0175">Coiled coil</keyword>
<keyword id="KW-0597">Phosphoprotein</keyword>
<keyword id="KW-1185">Reference proteome</keyword>
<keyword id="KW-0677">Repeat</keyword>
<dbReference type="EMBL" id="X53731">
    <property type="protein sequence ID" value="CAA37763.1"/>
    <property type="molecule type" value="Genomic_DNA"/>
</dbReference>
<dbReference type="EMBL" id="X97560">
    <property type="protein sequence ID" value="CAA66170.1"/>
    <property type="molecule type" value="Genomic_DNA"/>
</dbReference>
<dbReference type="EMBL" id="Z73126">
    <property type="protein sequence ID" value="CAA97469.1"/>
    <property type="molecule type" value="Genomic_DNA"/>
</dbReference>
<dbReference type="EMBL" id="BK006945">
    <property type="protein sequence ID" value="DAA09299.1"/>
    <property type="molecule type" value="Genomic_DNA"/>
</dbReference>
<dbReference type="PIR" id="A36426">
    <property type="entry name" value="A36426"/>
</dbReference>
<dbReference type="RefSeq" id="NP_013079.1">
    <property type="nucleotide sequence ID" value="NM_001181841.1"/>
</dbReference>
<dbReference type="SMR" id="P23201"/>
<dbReference type="BioGRID" id="31232">
    <property type="interactions" value="202"/>
</dbReference>
<dbReference type="ComplexPortal" id="CPX-3188">
    <property type="entry name" value="Polarisome"/>
</dbReference>
<dbReference type="DIP" id="DIP-99N"/>
<dbReference type="FunCoup" id="P23201">
    <property type="interactions" value="272"/>
</dbReference>
<dbReference type="IntAct" id="P23201">
    <property type="interactions" value="15"/>
</dbReference>
<dbReference type="MINT" id="P23201"/>
<dbReference type="STRING" id="4932.YLL021W"/>
<dbReference type="GlyGen" id="P23201">
    <property type="glycosylation" value="3 sites, 1 O-linked glycan (2 sites)"/>
</dbReference>
<dbReference type="iPTMnet" id="P23201"/>
<dbReference type="PaxDb" id="4932-YLL021W"/>
<dbReference type="PeptideAtlas" id="P23201"/>
<dbReference type="EnsemblFungi" id="YLL021W_mRNA">
    <property type="protein sequence ID" value="YLL021W"/>
    <property type="gene ID" value="YLL021W"/>
</dbReference>
<dbReference type="GeneID" id="850639"/>
<dbReference type="KEGG" id="sce:YLL021W"/>
<dbReference type="AGR" id="SGD:S000003944"/>
<dbReference type="SGD" id="S000003944">
    <property type="gene designation" value="SPA2"/>
</dbReference>
<dbReference type="VEuPathDB" id="FungiDB:YLL021W"/>
<dbReference type="eggNOG" id="ENOG502QS1N">
    <property type="taxonomic scope" value="Eukaryota"/>
</dbReference>
<dbReference type="GeneTree" id="ENSGT00940000176499"/>
<dbReference type="HOGENOM" id="CLU_002012_0_0_1"/>
<dbReference type="InParanoid" id="P23201"/>
<dbReference type="OMA" id="MKRNQAR"/>
<dbReference type="OrthoDB" id="5588096at2759"/>
<dbReference type="BioCyc" id="YEAST:G3O-32125-MONOMER"/>
<dbReference type="BioGRID-ORCS" id="850639">
    <property type="hits" value="6 hits in 10 CRISPR screens"/>
</dbReference>
<dbReference type="CD-CODE" id="D4C202DD">
    <property type="entry name" value="Polarisome"/>
</dbReference>
<dbReference type="CD-CODE" id="E03F929F">
    <property type="entry name" value="Stress granule"/>
</dbReference>
<dbReference type="PRO" id="PR:P23201"/>
<dbReference type="Proteomes" id="UP000002311">
    <property type="component" value="Chromosome XII"/>
</dbReference>
<dbReference type="RNAct" id="P23201">
    <property type="molecule type" value="protein"/>
</dbReference>
<dbReference type="GO" id="GO:0005826">
    <property type="term" value="C:actomyosin contractile ring"/>
    <property type="evidence" value="ECO:0000318"/>
    <property type="project" value="GO_Central"/>
</dbReference>
<dbReference type="GO" id="GO:0005938">
    <property type="term" value="C:cell cortex"/>
    <property type="evidence" value="ECO:0000314"/>
    <property type="project" value="SGD"/>
</dbReference>
<dbReference type="GO" id="GO:1902716">
    <property type="term" value="C:cell cortex of growing cell tip"/>
    <property type="evidence" value="ECO:0000318"/>
    <property type="project" value="GO_Central"/>
</dbReference>
<dbReference type="GO" id="GO:0005935">
    <property type="term" value="C:cellular bud neck"/>
    <property type="evidence" value="ECO:0000314"/>
    <property type="project" value="SGD"/>
</dbReference>
<dbReference type="GO" id="GO:0005934">
    <property type="term" value="C:cellular bud tip"/>
    <property type="evidence" value="ECO:0000314"/>
    <property type="project" value="SGD"/>
</dbReference>
<dbReference type="GO" id="GO:0000131">
    <property type="term" value="C:incipient cellular bud site"/>
    <property type="evidence" value="ECO:0000314"/>
    <property type="project" value="SGD"/>
</dbReference>
<dbReference type="GO" id="GO:0043332">
    <property type="term" value="C:mating projection tip"/>
    <property type="evidence" value="ECO:0000314"/>
    <property type="project" value="SGD"/>
</dbReference>
<dbReference type="GO" id="GO:0000133">
    <property type="term" value="C:polarisome"/>
    <property type="evidence" value="ECO:0000314"/>
    <property type="project" value="SGD"/>
</dbReference>
<dbReference type="GO" id="GO:0005078">
    <property type="term" value="F:MAP-kinase scaffold activity"/>
    <property type="evidence" value="ECO:0000314"/>
    <property type="project" value="SGD"/>
</dbReference>
<dbReference type="GO" id="GO:0007121">
    <property type="term" value="P:bipolar cellular bud site selection"/>
    <property type="evidence" value="ECO:0000315"/>
    <property type="project" value="SGD"/>
</dbReference>
<dbReference type="GO" id="GO:0007118">
    <property type="term" value="P:budding cell apical bud growth"/>
    <property type="evidence" value="ECO:0000315"/>
    <property type="project" value="SGD"/>
</dbReference>
<dbReference type="GO" id="GO:0071474">
    <property type="term" value="P:cellular hyperosmotic response"/>
    <property type="evidence" value="ECO:0000315"/>
    <property type="project" value="SGD"/>
</dbReference>
<dbReference type="GO" id="GO:0071468">
    <property type="term" value="P:cellular response to acidic pH"/>
    <property type="evidence" value="ECO:0000315"/>
    <property type="project" value="SGD"/>
</dbReference>
<dbReference type="GO" id="GO:0030010">
    <property type="term" value="P:establishment of cell polarity"/>
    <property type="evidence" value="ECO:0000315"/>
    <property type="project" value="SGD"/>
</dbReference>
<dbReference type="GO" id="GO:0030950">
    <property type="term" value="P:establishment or maintenance of actin cytoskeleton polarity"/>
    <property type="evidence" value="ECO:0000303"/>
    <property type="project" value="ComplexPortal"/>
</dbReference>
<dbReference type="GO" id="GO:0036267">
    <property type="term" value="P:invasive filamentous growth"/>
    <property type="evidence" value="ECO:0000316"/>
    <property type="project" value="SGD"/>
</dbReference>
<dbReference type="GO" id="GO:0007124">
    <property type="term" value="P:pseudohyphal growth"/>
    <property type="evidence" value="ECO:0000315"/>
    <property type="project" value="SGD"/>
</dbReference>
<dbReference type="GO" id="GO:0032956">
    <property type="term" value="P:regulation of actin cytoskeleton organization"/>
    <property type="evidence" value="ECO:0000315"/>
    <property type="project" value="SGD"/>
</dbReference>
<dbReference type="GO" id="GO:0008360">
    <property type="term" value="P:regulation of cell shape"/>
    <property type="evidence" value="ECO:0007669"/>
    <property type="project" value="UniProtKB-KW"/>
</dbReference>
<dbReference type="GO" id="GO:0032880">
    <property type="term" value="P:regulation of protein localization"/>
    <property type="evidence" value="ECO:0000315"/>
    <property type="project" value="SGD"/>
</dbReference>
<dbReference type="GO" id="GO:0006903">
    <property type="term" value="P:vesicle targeting"/>
    <property type="evidence" value="ECO:0000303"/>
    <property type="project" value="ComplexPortal"/>
</dbReference>
<dbReference type="FunFam" id="1.20.120.330:FF:000017">
    <property type="entry name" value="Polarisome protein, putative"/>
    <property type="match status" value="1"/>
</dbReference>
<dbReference type="Gene3D" id="1.20.120.330">
    <property type="entry name" value="Nucleotidyltransferases domain 2"/>
    <property type="match status" value="1"/>
</dbReference>
<dbReference type="InterPro" id="IPR022018">
    <property type="entry name" value="GIT1_C"/>
</dbReference>
<dbReference type="InterPro" id="IPR013724">
    <property type="entry name" value="GIT_SHD"/>
</dbReference>
<dbReference type="InterPro" id="IPR039892">
    <property type="entry name" value="Spa2/Sph1"/>
</dbReference>
<dbReference type="PANTHER" id="PTHR21601:SF0">
    <property type="entry name" value="PROTEIN SPA2-RELATED"/>
    <property type="match status" value="1"/>
</dbReference>
<dbReference type="PANTHER" id="PTHR21601">
    <property type="entry name" value="SPA2 PROTEIN"/>
    <property type="match status" value="1"/>
</dbReference>
<dbReference type="Pfam" id="PF12205">
    <property type="entry name" value="GIT1_C"/>
    <property type="match status" value="1"/>
</dbReference>
<dbReference type="Pfam" id="PF08518">
    <property type="entry name" value="GIT_SHD"/>
    <property type="match status" value="2"/>
</dbReference>
<dbReference type="SMART" id="SM00555">
    <property type="entry name" value="GIT"/>
    <property type="match status" value="4"/>
</dbReference>
<accession>P23201</accession>
<accession>D6VXY3</accession>
<feature type="chain" id="PRO_0000072090" description="Protein SPA2">
    <location>
        <begin position="1"/>
        <end position="1466"/>
    </location>
</feature>
<feature type="repeat" description="1">
    <location>
        <begin position="818"/>
        <end position="825"/>
    </location>
</feature>
<feature type="repeat" description="2">
    <location>
        <begin position="826"/>
        <end position="834"/>
    </location>
</feature>
<feature type="repeat" description="3">
    <location>
        <begin position="835"/>
        <end position="843"/>
    </location>
</feature>
<feature type="repeat" description="4">
    <location>
        <begin position="860"/>
        <end position="868"/>
    </location>
</feature>
<feature type="repeat" description="5">
    <location>
        <begin position="875"/>
        <end position="883"/>
    </location>
</feature>
<feature type="repeat" description="6">
    <location>
        <begin position="884"/>
        <end position="892"/>
    </location>
</feature>
<feature type="repeat" description="7">
    <location>
        <begin position="893"/>
        <end position="901"/>
    </location>
</feature>
<feature type="repeat" description="8">
    <location>
        <begin position="902"/>
        <end position="910"/>
    </location>
</feature>
<feature type="repeat" description="9">
    <location>
        <begin position="911"/>
        <end position="919"/>
    </location>
</feature>
<feature type="repeat" description="10">
    <location>
        <begin position="920"/>
        <end position="928"/>
    </location>
</feature>
<feature type="repeat" description="11">
    <location>
        <begin position="929"/>
        <end position="937"/>
    </location>
</feature>
<feature type="repeat" description="12">
    <location>
        <begin position="938"/>
        <end position="946"/>
    </location>
</feature>
<feature type="repeat" description="13">
    <location>
        <begin position="947"/>
        <end position="953"/>
    </location>
</feature>
<feature type="repeat" description="14">
    <location>
        <begin position="954"/>
        <end position="961"/>
    </location>
</feature>
<feature type="repeat" description="15">
    <location>
        <begin position="962"/>
        <end position="970"/>
    </location>
</feature>
<feature type="repeat" description="16">
    <location>
        <begin position="971"/>
        <end position="979"/>
    </location>
</feature>
<feature type="repeat" description="17">
    <location>
        <begin position="980"/>
        <end position="988"/>
    </location>
</feature>
<feature type="repeat" description="18">
    <location>
        <begin position="989"/>
        <end position="997"/>
    </location>
</feature>
<feature type="repeat" description="19">
    <location>
        <begin position="998"/>
        <end position="1006"/>
    </location>
</feature>
<feature type="repeat" description="20">
    <location>
        <begin position="1007"/>
        <end position="1015"/>
    </location>
</feature>
<feature type="repeat" description="21">
    <location>
        <begin position="1036"/>
        <end position="1044"/>
    </location>
</feature>
<feature type="repeat" description="22">
    <location>
        <begin position="1045"/>
        <end position="1053"/>
    </location>
</feature>
<feature type="repeat" description="23">
    <location>
        <begin position="1054"/>
        <end position="1062"/>
    </location>
</feature>
<feature type="repeat" description="24">
    <location>
        <begin position="1072"/>
        <end position="1080"/>
    </location>
</feature>
<feature type="repeat" description="25">
    <location>
        <begin position="1081"/>
        <end position="1087"/>
    </location>
</feature>
<feature type="region of interest" description="Disordered" evidence="2">
    <location>
        <begin position="123"/>
        <end position="163"/>
    </location>
</feature>
<feature type="region of interest" description="Disordered" evidence="2">
    <location>
        <begin position="181"/>
        <end position="223"/>
    </location>
</feature>
<feature type="region of interest" description="Disordered" evidence="2">
    <location>
        <begin position="261"/>
        <end position="290"/>
    </location>
</feature>
<feature type="region of interest" description="Disordered" evidence="2">
    <location>
        <begin position="522"/>
        <end position="562"/>
    </location>
</feature>
<feature type="region of interest" description="Disordered" evidence="2">
    <location>
        <begin position="676"/>
        <end position="782"/>
    </location>
</feature>
<feature type="region of interest" description="Disordered" evidence="2">
    <location>
        <begin position="816"/>
        <end position="915"/>
    </location>
</feature>
<feature type="region of interest" description="25 X 9 AA approximate tandem repeats">
    <location>
        <begin position="818"/>
        <end position="1087"/>
    </location>
</feature>
<feature type="region of interest" description="Disordered" evidence="2">
    <location>
        <begin position="954"/>
        <end position="1086"/>
    </location>
</feature>
<feature type="region of interest" description="Disordered" evidence="2">
    <location>
        <begin position="1098"/>
        <end position="1130"/>
    </location>
</feature>
<feature type="region of interest" description="Disordered" evidence="2">
    <location>
        <begin position="1171"/>
        <end position="1246"/>
    </location>
</feature>
<feature type="region of interest" description="Disordered" evidence="2">
    <location>
        <begin position="1276"/>
        <end position="1312"/>
    </location>
</feature>
<feature type="coiled-coil region" evidence="1">
    <location>
        <begin position="286"/>
        <end position="388"/>
    </location>
</feature>
<feature type="coiled-coil region" evidence="1">
    <location>
        <begin position="1169"/>
        <end position="1189"/>
    </location>
</feature>
<feature type="coiled-coil region" evidence="1">
    <location>
        <begin position="1275"/>
        <end position="1302"/>
    </location>
</feature>
<feature type="compositionally biased region" description="Basic and acidic residues" evidence="2">
    <location>
        <begin position="140"/>
        <end position="149"/>
    </location>
</feature>
<feature type="compositionally biased region" description="Polar residues" evidence="2">
    <location>
        <begin position="150"/>
        <end position="163"/>
    </location>
</feature>
<feature type="compositionally biased region" description="Basic and acidic residues" evidence="2">
    <location>
        <begin position="191"/>
        <end position="212"/>
    </location>
</feature>
<feature type="compositionally biased region" description="Basic and acidic residues" evidence="2">
    <location>
        <begin position="261"/>
        <end position="270"/>
    </location>
</feature>
<feature type="compositionally biased region" description="Polar residues" evidence="2">
    <location>
        <begin position="526"/>
        <end position="536"/>
    </location>
</feature>
<feature type="compositionally biased region" description="Low complexity" evidence="2">
    <location>
        <begin position="543"/>
        <end position="559"/>
    </location>
</feature>
<feature type="compositionally biased region" description="Basic and acidic residues" evidence="2">
    <location>
        <begin position="693"/>
        <end position="704"/>
    </location>
</feature>
<feature type="compositionally biased region" description="Polar residues" evidence="2">
    <location>
        <begin position="705"/>
        <end position="716"/>
    </location>
</feature>
<feature type="compositionally biased region" description="Basic and acidic residues" evidence="2">
    <location>
        <begin position="718"/>
        <end position="747"/>
    </location>
</feature>
<feature type="compositionally biased region" description="Acidic residues" evidence="2">
    <location>
        <begin position="761"/>
        <end position="781"/>
    </location>
</feature>
<feature type="compositionally biased region" description="Basic and acidic residues" evidence="2">
    <location>
        <begin position="816"/>
        <end position="830"/>
    </location>
</feature>
<feature type="compositionally biased region" description="Low complexity" evidence="2">
    <location>
        <begin position="831"/>
        <end position="848"/>
    </location>
</feature>
<feature type="compositionally biased region" description="Basic and acidic residues" evidence="2">
    <location>
        <begin position="973"/>
        <end position="987"/>
    </location>
</feature>
<feature type="compositionally biased region" description="Polar residues" evidence="2">
    <location>
        <begin position="1050"/>
        <end position="1066"/>
    </location>
</feature>
<feature type="compositionally biased region" description="Polar residues" evidence="2">
    <location>
        <begin position="1107"/>
        <end position="1123"/>
    </location>
</feature>
<feature type="compositionally biased region" description="Basic and acidic residues" evidence="2">
    <location>
        <begin position="1171"/>
        <end position="1181"/>
    </location>
</feature>
<feature type="compositionally biased region" description="Basic and acidic residues" evidence="2">
    <location>
        <begin position="1193"/>
        <end position="1206"/>
    </location>
</feature>
<feature type="compositionally biased region" description="Polar residues" evidence="2">
    <location>
        <begin position="1211"/>
        <end position="1238"/>
    </location>
</feature>
<feature type="compositionally biased region" description="Basic and acidic residues" evidence="2">
    <location>
        <begin position="1276"/>
        <end position="1287"/>
    </location>
</feature>
<feature type="compositionally biased region" description="Acidic residues" evidence="2">
    <location>
        <begin position="1288"/>
        <end position="1312"/>
    </location>
</feature>
<feature type="modified residue" description="Phosphoserine" evidence="7 9">
    <location>
        <position position="182"/>
    </location>
</feature>
<feature type="modified residue" description="Phosphoserine" evidence="7 9">
    <location>
        <position position="183"/>
    </location>
</feature>
<feature type="modified residue" description="Phosphothreonine" evidence="8 9">
    <location>
        <position position="220"/>
    </location>
</feature>
<feature type="modified residue" description="Phosphoserine" evidence="7 8 9">
    <location>
        <position position="254"/>
    </location>
</feature>
<feature type="modified residue" description="Phosphoserine" evidence="8 9">
    <location>
        <position position="274"/>
    </location>
</feature>
<feature type="modified residue" description="Phosphoserine" evidence="8">
    <location>
        <position position="301"/>
    </location>
</feature>
<feature type="modified residue" description="Phosphoserine" evidence="7 8 9">
    <location>
        <position position="585"/>
    </location>
</feature>
<feature type="modified residue" description="Phosphoserine" evidence="7 8 9">
    <location>
        <position position="599"/>
    </location>
</feature>
<feature type="modified residue" description="Phosphoserine" evidence="7">
    <location>
        <position position="646"/>
    </location>
</feature>
<feature type="modified residue" description="Phosphoserine" evidence="6 9">
    <location>
        <position position="817"/>
    </location>
</feature>
<feature type="modified residue" description="Phosphoserine" evidence="6 9">
    <location>
        <position position="820"/>
    </location>
</feature>
<feature type="modified residue" description="Phosphoserine" evidence="8">
    <location>
        <position position="865"/>
    </location>
</feature>
<feature type="modified residue" description="Phosphoserine" evidence="7 8 9">
    <location>
        <position position="883"/>
    </location>
</feature>
<feature type="modified residue" description="Phosphoserine" evidence="8">
    <location>
        <position position="910"/>
    </location>
</feature>
<feature type="modified residue" description="Phosphoserine" evidence="6 7">
    <location>
        <position position="937"/>
    </location>
</feature>
<feature type="modified residue" description="Phosphoserine" evidence="6 7 9">
    <location>
        <position position="961"/>
    </location>
</feature>
<feature type="modified residue" description="Phosphoserine" evidence="7 8 9">
    <location>
        <position position="979"/>
    </location>
</feature>
<feature type="modified residue" description="Phosphoserine" evidence="6">
    <location>
        <position position="1053"/>
    </location>
</feature>
<feature type="modified residue" description="Phosphoserine" evidence="6">
    <location>
        <position position="1056"/>
    </location>
</feature>
<feature type="modified residue" description="Phosphoserine" evidence="5">
    <location>
        <position position="1080"/>
    </location>
</feature>
<feature type="modified residue" description="Phosphoserine" evidence="9">
    <location>
        <position position="1173"/>
    </location>
</feature>
<feature type="modified residue" description="Phosphothreonine" evidence="7 8 9">
    <location>
        <position position="1179"/>
    </location>
</feature>
<feature type="modified residue" description="Phosphoserine" evidence="7 8 9">
    <location>
        <position position="1180"/>
    </location>
</feature>
<feature type="modified residue" description="Phosphothreonine" evidence="9">
    <location>
        <position position="1251"/>
    </location>
</feature>
<feature type="modified residue" description="Phosphoserine" evidence="7 9">
    <location>
        <position position="1263"/>
    </location>
</feature>
<reference key="1">
    <citation type="journal article" date="1990" name="J. Cell Biol.">
        <title>The SPA2 gene of Saccharomyces cerevisiae is important for pheromone-induced morphogenesis and efficient mating.</title>
        <authorList>
            <person name="Gehrung S."/>
            <person name="Snyder M."/>
        </authorList>
    </citation>
    <scope>NUCLEOTIDE SEQUENCE [GENOMIC DNA]</scope>
    <source>
        <strain>ATCC 204508 / S288c</strain>
    </source>
</reference>
<reference key="2">
    <citation type="journal article" date="1997" name="Yeast">
        <title>The sequence of 32kb on the left arm of yeast chromosome XII reveals six known genes, a new member of the seripauperins family and a new ABC transporter homologous to the human multidrug resistance protein.</title>
        <authorList>
            <person name="Purnelle B."/>
            <person name="Goffeau A."/>
        </authorList>
    </citation>
    <scope>NUCLEOTIDE SEQUENCE [GENOMIC DNA]</scope>
    <source>
        <strain>ATCC 204508 / S288c</strain>
    </source>
</reference>
<reference key="3">
    <citation type="journal article" date="1997" name="Nature">
        <title>The nucleotide sequence of Saccharomyces cerevisiae chromosome XII.</title>
        <authorList>
            <person name="Johnston M."/>
            <person name="Hillier L.W."/>
            <person name="Riles L."/>
            <person name="Albermann K."/>
            <person name="Andre B."/>
            <person name="Ansorge W."/>
            <person name="Benes V."/>
            <person name="Brueckner M."/>
            <person name="Delius H."/>
            <person name="Dubois E."/>
            <person name="Duesterhoeft A."/>
            <person name="Entian K.-D."/>
            <person name="Floeth M."/>
            <person name="Goffeau A."/>
            <person name="Hebling U."/>
            <person name="Heumann K."/>
            <person name="Heuss-Neitzel D."/>
            <person name="Hilbert H."/>
            <person name="Hilger F."/>
            <person name="Kleine K."/>
            <person name="Koetter P."/>
            <person name="Louis E.J."/>
            <person name="Messenguy F."/>
            <person name="Mewes H.-W."/>
            <person name="Miosga T."/>
            <person name="Moestl D."/>
            <person name="Mueller-Auer S."/>
            <person name="Nentwich U."/>
            <person name="Obermaier B."/>
            <person name="Piravandi E."/>
            <person name="Pohl T.M."/>
            <person name="Portetelle D."/>
            <person name="Purnelle B."/>
            <person name="Rechmann S."/>
            <person name="Rieger M."/>
            <person name="Rinke M."/>
            <person name="Rose M."/>
            <person name="Scharfe M."/>
            <person name="Scherens B."/>
            <person name="Scholler P."/>
            <person name="Schwager C."/>
            <person name="Schwarz S."/>
            <person name="Underwood A.P."/>
            <person name="Urrestarazu L.A."/>
            <person name="Vandenbol M."/>
            <person name="Verhasselt P."/>
            <person name="Vierendeels F."/>
            <person name="Voet M."/>
            <person name="Volckaert G."/>
            <person name="Voss H."/>
            <person name="Wambutt R."/>
            <person name="Wedler E."/>
            <person name="Wedler H."/>
            <person name="Zimmermann F.K."/>
            <person name="Zollner A."/>
            <person name="Hani J."/>
            <person name="Hoheisel J.D."/>
        </authorList>
    </citation>
    <scope>NUCLEOTIDE SEQUENCE [LARGE SCALE GENOMIC DNA]</scope>
    <source>
        <strain>ATCC 204508 / S288c</strain>
    </source>
</reference>
<reference key="4">
    <citation type="journal article" date="2014" name="G3 (Bethesda)">
        <title>The reference genome sequence of Saccharomyces cerevisiae: Then and now.</title>
        <authorList>
            <person name="Engel S.R."/>
            <person name="Dietrich F.S."/>
            <person name="Fisk D.G."/>
            <person name="Binkley G."/>
            <person name="Balakrishnan R."/>
            <person name="Costanzo M.C."/>
            <person name="Dwight S.S."/>
            <person name="Hitz B.C."/>
            <person name="Karra K."/>
            <person name="Nash R.S."/>
            <person name="Weng S."/>
            <person name="Wong E.D."/>
            <person name="Lloyd P."/>
            <person name="Skrzypek M.S."/>
            <person name="Miyasato S.R."/>
            <person name="Simison M."/>
            <person name="Cherry J.M."/>
        </authorList>
    </citation>
    <scope>GENOME REANNOTATION</scope>
    <source>
        <strain>ATCC 204508 / S288c</strain>
    </source>
</reference>
<reference key="5">
    <citation type="journal article" date="1998" name="Biochem. Biophys. Res. Commun.">
        <title>Shs1p: a novel member of septin that interacts with spa2p, involved in polarized growth in Saccharomyces cerevisiae.</title>
        <authorList>
            <person name="Mino A."/>
            <person name="Tanaka K."/>
            <person name="Kamei T."/>
            <person name="Umikawa M."/>
            <person name="Fujiwara T."/>
            <person name="Takai Y."/>
        </authorList>
    </citation>
    <scope>INTERACTION WITH SHS1</scope>
</reference>
<reference key="6">
    <citation type="journal article" date="2003" name="Nature">
        <title>Global analysis of protein expression in yeast.</title>
        <authorList>
            <person name="Ghaemmaghami S."/>
            <person name="Huh W.-K."/>
            <person name="Bower K."/>
            <person name="Howson R.W."/>
            <person name="Belle A."/>
            <person name="Dephoure N."/>
            <person name="O'Shea E.K."/>
            <person name="Weissman J.S."/>
        </authorList>
    </citation>
    <scope>LEVEL OF PROTEIN EXPRESSION [LARGE SCALE ANALYSIS]</scope>
</reference>
<reference key="7">
    <citation type="journal article" date="2005" name="Mol. Cell. Proteomics">
        <title>Quantitative phosphoproteomics applied to the yeast pheromone signaling pathway.</title>
        <authorList>
            <person name="Gruhler A."/>
            <person name="Olsen J.V."/>
            <person name="Mohammed S."/>
            <person name="Mortensen P."/>
            <person name="Faergeman N.J."/>
            <person name="Mann M."/>
            <person name="Jensen O.N."/>
        </authorList>
    </citation>
    <scope>PHOSPHORYLATION [LARGE SCALE ANALYSIS] AT SER-1080</scope>
    <scope>IDENTIFICATION BY MASS SPECTROMETRY [LARGE SCALE ANALYSIS]</scope>
    <source>
        <strain>YAL6B</strain>
    </source>
</reference>
<reference key="8">
    <citation type="journal article" date="2007" name="J. Proteome Res.">
        <title>Large-scale phosphorylation analysis of alpha-factor-arrested Saccharomyces cerevisiae.</title>
        <authorList>
            <person name="Li X."/>
            <person name="Gerber S.A."/>
            <person name="Rudner A.D."/>
            <person name="Beausoleil S.A."/>
            <person name="Haas W."/>
            <person name="Villen J."/>
            <person name="Elias J.E."/>
            <person name="Gygi S.P."/>
        </authorList>
    </citation>
    <scope>PHOSPHORYLATION [LARGE SCALE ANALYSIS] AT SER-182; SER-183; SER-254; SER-585; SER-599; SER-646; SER-883; SER-937; SER-961; SER-979; THR-1179; SER-1180 AND SER-1263</scope>
    <scope>IDENTIFICATION BY MASS SPECTROMETRY [LARGE SCALE ANALYSIS]</scope>
    <source>
        <strain>ADR376</strain>
    </source>
</reference>
<reference key="9">
    <citation type="journal article" date="2007" name="Proc. Natl. Acad. Sci. U.S.A.">
        <title>Analysis of phosphorylation sites on proteins from Saccharomyces cerevisiae by electron transfer dissociation (ETD) mass spectrometry.</title>
        <authorList>
            <person name="Chi A."/>
            <person name="Huttenhower C."/>
            <person name="Geer L.Y."/>
            <person name="Coon J.J."/>
            <person name="Syka J.E.P."/>
            <person name="Bai D.L."/>
            <person name="Shabanowitz J."/>
            <person name="Burke D.J."/>
            <person name="Troyanskaya O.G."/>
            <person name="Hunt D.F."/>
        </authorList>
    </citation>
    <scope>PHOSPHORYLATION [LARGE SCALE ANALYSIS] AT SER-817; SER-820; SER-937; SER-961; SER-1053 AND SER-1056</scope>
    <scope>IDENTIFICATION BY MASS SPECTROMETRY [LARGE SCALE ANALYSIS]</scope>
</reference>
<reference key="10">
    <citation type="journal article" date="2008" name="Mol. Cell. Proteomics">
        <title>A multidimensional chromatography technology for in-depth phosphoproteome analysis.</title>
        <authorList>
            <person name="Albuquerque C.P."/>
            <person name="Smolka M.B."/>
            <person name="Payne S.H."/>
            <person name="Bafna V."/>
            <person name="Eng J."/>
            <person name="Zhou H."/>
        </authorList>
    </citation>
    <scope>PHOSPHORYLATION [LARGE SCALE ANALYSIS] AT THR-220; SER-254; SER-274; SER-301; SER-585; SER-599; SER-865; SER-883; SER-910; SER-979; THR-1179 AND SER-1180</scope>
    <scope>IDENTIFICATION BY MASS SPECTROMETRY [LARGE SCALE ANALYSIS]</scope>
</reference>
<reference key="11">
    <citation type="journal article" date="2009" name="Science">
        <title>Global analysis of Cdk1 substrate phosphorylation sites provides insights into evolution.</title>
        <authorList>
            <person name="Holt L.J."/>
            <person name="Tuch B.B."/>
            <person name="Villen J."/>
            <person name="Johnson A.D."/>
            <person name="Gygi S.P."/>
            <person name="Morgan D.O."/>
        </authorList>
    </citation>
    <scope>PHOSPHORYLATION [LARGE SCALE ANALYSIS] AT SER-182; SER-183; THR-220; SER-254; SER-274; SER-585; SER-599; SER-817; SER-820; SER-883; SER-961; SER-979; SER-1173; THR-1179; SER-1180; THR-1251 AND SER-1263</scope>
    <scope>IDENTIFICATION BY MASS SPECTROMETRY [LARGE SCALE ANALYSIS]</scope>
</reference>
<protein>
    <recommendedName>
        <fullName>Protein SPA2</fullName>
    </recommendedName>
</protein>
<sequence>MGTSSEVSLAHHRDIFHYYVSLKTFFEVTGENRDRSNSTRAQKARAKLLKLSSSQFYELSTDVSDELQRRIGEDANQPDYLLPKANFHMKRNQARQKLANLSQTRFNDLLDDILFEIKRRGFDKDLDAPRPPLPQPMKQEVSKDSDDTARTSTNSSSVTQVAPNVSVQPSLVIPKMASIDWSSEEEEEEQVKEKPNEPEGKQTSMDEKKEAKPALNPIVTDSDLPDSQVLARDITSMARTPTTTHKNYWDVNDSPIIKVDKDIDNEKGPEQLKSPEVQRAENNNPNSEMEDKVKELTDLNSDLHLQIEDLNAKLASLTSEKEKEKKEEKEEKEKEKNLKINYTIDESFQKELLSLNSQIGELSIENENLKQKISEFELHQKKNDNHNDLKITDGFISKYSSADGLIPAQYILNANNLIIQFTTRLSAVPIGDSTAISHQIGEELFQILSQLSNLISQLLLSADLLQYKDQVILLKASLSHAITSIRYFSVYGPVLIPKITVQAAVSEVCFAMCNLIDSAKIKSDSNGESTTSNEGNRQVLEYSSPTATTPMTPTFPSTSGINMKKGFINPRKPASFLNDVEEEESPVKPLKITQKAINSPIIRPSSSNGVPTTSRKPSGTGLFSLMIDSSIAKNSSHKEDNDKYVSPIKAVTSASNSASSNISEIPKLTLPPQAKIGTVIPPSENQVPNIKIENTEEDNKRSDITNEISVKPTSSIADKLKQFEQSSEKKSSPKENPIAKEEMDSKPKLSNKFITSMNDVSTDDSSSDGNENDDADDDDDFTYMALKQTMKREGSKIEKNNDSKLPANIVELDLHESPESVKIESPESIKEITSSEMSSEMPSSSLPKRLVEDVEPSEMPEKGASVESVRKKNFQEPLGNVESPDMTQKVKSLGMTGKAVGPESDSRVESPGMTGQIKSLNMAGKVVGPEADSRVESPGMKEQIKSLGMTGKITAQESIKSPEAARKLASSGEVDKIESPRMVRESESLEAVGNTIPSNMTVKMESPNLKGNTVSEPQEIRRDIASSEPIENVDPPKVLKKIVFPKAVNRTGSPKSVEKTPSSATLKKSGLPEPNSQIVSPELAKNSPLAPIKKNVELRETNKPHTETITSVEPTNKDANTSWRDADLNRTIKREEEDEDFDRVNHNIQITGAYTKTGKIDYHKIPVDRKAKSEAEVHTSEEDIDESNNVNGKRADAQIHITERKHAFVNPTENSQVKKTSHSPFLNSKPVQYENSESNGGINNHIKIKNTGETTAHDEKHYSDDDDSSYQFVPMKHEEQEQEQNRSEEEESEDDDEEEEDSDFDVDTFDIENPDNTLSELLLYLEHQTMDVISTIQSLLTSIKKPQVTKGNLRGESNAINQVIGQMVDATSISMEQSRNANLKKHGDWVVQSLRDCSRRMTILCQLTGDGILAKEKSDQDYADKNFKQRLAGIAFDVAKCTKELVKTVEEASLKDEINYLNSKLK</sequence>